<name>GHRB_SHIBS</name>
<protein>
    <recommendedName>
        <fullName evidence="1">Glyoxylate/hydroxypyruvate reductase B</fullName>
        <ecNumber evidence="1">1.1.1.79</ecNumber>
        <ecNumber evidence="1">1.1.1.81</ecNumber>
    </recommendedName>
</protein>
<accession>Q31V71</accession>
<organism>
    <name type="scientific">Shigella boydii serotype 4 (strain Sb227)</name>
    <dbReference type="NCBI Taxonomy" id="300268"/>
    <lineage>
        <taxon>Bacteria</taxon>
        <taxon>Pseudomonadati</taxon>
        <taxon>Pseudomonadota</taxon>
        <taxon>Gammaproteobacteria</taxon>
        <taxon>Enterobacterales</taxon>
        <taxon>Enterobacteriaceae</taxon>
        <taxon>Shigella</taxon>
    </lineage>
</organism>
<gene>
    <name evidence="1" type="primary">ghrB</name>
    <name type="ordered locus">SBO_3555</name>
</gene>
<reference key="1">
    <citation type="journal article" date="2005" name="Nucleic Acids Res.">
        <title>Genome dynamics and diversity of Shigella species, the etiologic agents of bacillary dysentery.</title>
        <authorList>
            <person name="Yang F."/>
            <person name="Yang J."/>
            <person name="Zhang X."/>
            <person name="Chen L."/>
            <person name="Jiang Y."/>
            <person name="Yan Y."/>
            <person name="Tang X."/>
            <person name="Wang J."/>
            <person name="Xiong Z."/>
            <person name="Dong J."/>
            <person name="Xue Y."/>
            <person name="Zhu Y."/>
            <person name="Xu X."/>
            <person name="Sun L."/>
            <person name="Chen S."/>
            <person name="Nie H."/>
            <person name="Peng J."/>
            <person name="Xu J."/>
            <person name="Wang Y."/>
            <person name="Yuan Z."/>
            <person name="Wen Y."/>
            <person name="Yao Z."/>
            <person name="Shen Y."/>
            <person name="Qiang B."/>
            <person name="Hou Y."/>
            <person name="Yu J."/>
            <person name="Jin Q."/>
        </authorList>
    </citation>
    <scope>NUCLEOTIDE SEQUENCE [LARGE SCALE GENOMIC DNA]</scope>
    <source>
        <strain>Sb227</strain>
    </source>
</reference>
<keyword id="KW-0963">Cytoplasm</keyword>
<keyword id="KW-0520">NAD</keyword>
<keyword id="KW-0521">NADP</keyword>
<keyword id="KW-0560">Oxidoreductase</keyword>
<proteinExistence type="inferred from homology"/>
<dbReference type="EC" id="1.1.1.79" evidence="1"/>
<dbReference type="EC" id="1.1.1.81" evidence="1"/>
<dbReference type="EMBL" id="CP000036">
    <property type="protein sequence ID" value="ABB68037.1"/>
    <property type="status" value="ALT_INIT"/>
    <property type="molecule type" value="Genomic_DNA"/>
</dbReference>
<dbReference type="RefSeq" id="WP_000805024.1">
    <property type="nucleotide sequence ID" value="NC_007613.1"/>
</dbReference>
<dbReference type="SMR" id="Q31V71"/>
<dbReference type="KEGG" id="sbo:SBO_3555"/>
<dbReference type="HOGENOM" id="CLU_019796_1_2_6"/>
<dbReference type="Proteomes" id="UP000007067">
    <property type="component" value="Chromosome"/>
</dbReference>
<dbReference type="GO" id="GO:0005829">
    <property type="term" value="C:cytosol"/>
    <property type="evidence" value="ECO:0007669"/>
    <property type="project" value="TreeGrafter"/>
</dbReference>
<dbReference type="GO" id="GO:0005886">
    <property type="term" value="C:plasma membrane"/>
    <property type="evidence" value="ECO:0007669"/>
    <property type="project" value="UniProtKB-UniRule"/>
</dbReference>
<dbReference type="GO" id="GO:0030267">
    <property type="term" value="F:glyoxylate reductase (NADPH) activity"/>
    <property type="evidence" value="ECO:0007669"/>
    <property type="project" value="UniProtKB-UniRule"/>
</dbReference>
<dbReference type="GO" id="GO:0008465">
    <property type="term" value="F:hydroxypyruvate reductase (NADH) activity"/>
    <property type="evidence" value="ECO:0007669"/>
    <property type="project" value="RHEA"/>
</dbReference>
<dbReference type="GO" id="GO:0120509">
    <property type="term" value="F:hydroxypyruvate reductase (NADPH) activity"/>
    <property type="evidence" value="ECO:0007669"/>
    <property type="project" value="RHEA"/>
</dbReference>
<dbReference type="GO" id="GO:0051287">
    <property type="term" value="F:NAD binding"/>
    <property type="evidence" value="ECO:0007669"/>
    <property type="project" value="InterPro"/>
</dbReference>
<dbReference type="CDD" id="cd05301">
    <property type="entry name" value="GDH"/>
    <property type="match status" value="1"/>
</dbReference>
<dbReference type="FunFam" id="3.40.50.720:FF:000026">
    <property type="entry name" value="Glyoxylate/hydroxypyruvate reductase B"/>
    <property type="match status" value="1"/>
</dbReference>
<dbReference type="Gene3D" id="3.40.50.720">
    <property type="entry name" value="NAD(P)-binding Rossmann-like Domain"/>
    <property type="match status" value="2"/>
</dbReference>
<dbReference type="HAMAP" id="MF_01667">
    <property type="entry name" value="2_Hacid_dh_C_GhrB"/>
    <property type="match status" value="1"/>
</dbReference>
<dbReference type="InterPro" id="IPR050223">
    <property type="entry name" value="D-isomer_2-hydroxyacid_DH"/>
</dbReference>
<dbReference type="InterPro" id="IPR006139">
    <property type="entry name" value="D-isomer_2_OHA_DH_cat_dom"/>
</dbReference>
<dbReference type="InterPro" id="IPR029753">
    <property type="entry name" value="D-isomer_DH_CS"/>
</dbReference>
<dbReference type="InterPro" id="IPR006140">
    <property type="entry name" value="D-isomer_DH_NAD-bd"/>
</dbReference>
<dbReference type="InterPro" id="IPR023756">
    <property type="entry name" value="Glyo/OHPyrv_Rdtase_B"/>
</dbReference>
<dbReference type="InterPro" id="IPR036291">
    <property type="entry name" value="NAD(P)-bd_dom_sf"/>
</dbReference>
<dbReference type="NCBIfam" id="NF011938">
    <property type="entry name" value="PRK15409.1"/>
    <property type="match status" value="1"/>
</dbReference>
<dbReference type="PANTHER" id="PTHR10996">
    <property type="entry name" value="2-HYDROXYACID DEHYDROGENASE-RELATED"/>
    <property type="match status" value="1"/>
</dbReference>
<dbReference type="PANTHER" id="PTHR10996:SF283">
    <property type="entry name" value="GLYOXYLATE_HYDROXYPYRUVATE REDUCTASE B"/>
    <property type="match status" value="1"/>
</dbReference>
<dbReference type="Pfam" id="PF00389">
    <property type="entry name" value="2-Hacid_dh"/>
    <property type="match status" value="1"/>
</dbReference>
<dbReference type="Pfam" id="PF02826">
    <property type="entry name" value="2-Hacid_dh_C"/>
    <property type="match status" value="1"/>
</dbReference>
<dbReference type="SUPFAM" id="SSF52283">
    <property type="entry name" value="Formate/glycerate dehydrogenase catalytic domain-like"/>
    <property type="match status" value="1"/>
</dbReference>
<dbReference type="SUPFAM" id="SSF51735">
    <property type="entry name" value="NAD(P)-binding Rossmann-fold domains"/>
    <property type="match status" value="1"/>
</dbReference>
<dbReference type="PROSITE" id="PS00670">
    <property type="entry name" value="D_2_HYDROXYACID_DH_2"/>
    <property type="match status" value="1"/>
</dbReference>
<dbReference type="PROSITE" id="PS00671">
    <property type="entry name" value="D_2_HYDROXYACID_DH_3"/>
    <property type="match status" value="1"/>
</dbReference>
<comment type="function">
    <text evidence="1">Catalyzes the NADPH-dependent reduction of glyoxylate and hydroxypyruvate into glycolate and glycerate, respectively.</text>
</comment>
<comment type="catalytic activity">
    <reaction evidence="1">
        <text>glycolate + NADP(+) = glyoxylate + NADPH + H(+)</text>
        <dbReference type="Rhea" id="RHEA:10992"/>
        <dbReference type="ChEBI" id="CHEBI:15378"/>
        <dbReference type="ChEBI" id="CHEBI:29805"/>
        <dbReference type="ChEBI" id="CHEBI:36655"/>
        <dbReference type="ChEBI" id="CHEBI:57783"/>
        <dbReference type="ChEBI" id="CHEBI:58349"/>
        <dbReference type="EC" id="1.1.1.79"/>
    </reaction>
</comment>
<comment type="catalytic activity">
    <reaction evidence="1">
        <text>(R)-glycerate + NAD(+) = 3-hydroxypyruvate + NADH + H(+)</text>
        <dbReference type="Rhea" id="RHEA:17905"/>
        <dbReference type="ChEBI" id="CHEBI:15378"/>
        <dbReference type="ChEBI" id="CHEBI:16659"/>
        <dbReference type="ChEBI" id="CHEBI:17180"/>
        <dbReference type="ChEBI" id="CHEBI:57540"/>
        <dbReference type="ChEBI" id="CHEBI:57945"/>
        <dbReference type="EC" id="1.1.1.81"/>
    </reaction>
</comment>
<comment type="catalytic activity">
    <reaction evidence="1">
        <text>(R)-glycerate + NADP(+) = 3-hydroxypyruvate + NADPH + H(+)</text>
        <dbReference type="Rhea" id="RHEA:18657"/>
        <dbReference type="ChEBI" id="CHEBI:15378"/>
        <dbReference type="ChEBI" id="CHEBI:16659"/>
        <dbReference type="ChEBI" id="CHEBI:17180"/>
        <dbReference type="ChEBI" id="CHEBI:57783"/>
        <dbReference type="ChEBI" id="CHEBI:58349"/>
        <dbReference type="EC" id="1.1.1.81"/>
    </reaction>
</comment>
<comment type="subunit">
    <text evidence="1">Homodimer.</text>
</comment>
<comment type="subcellular location">
    <subcellularLocation>
        <location evidence="1">Cytoplasm</location>
    </subcellularLocation>
</comment>
<comment type="similarity">
    <text evidence="1">Belongs to the D-isomer specific 2-hydroxyacid dehydrogenase family. GhrB subfamily.</text>
</comment>
<comment type="sequence caution" evidence="2">
    <conflict type="erroneous initiation">
        <sequence resource="EMBL-CDS" id="ABB68037"/>
    </conflict>
</comment>
<sequence>MKPSVILYKALPDDLLQRLQEHFTVHQVANLSPQTVEQNAAIFAEAEGLLGSNENVDAALLEKMPKLRATSTISVGYDNFDVDALTARKILLMHTPTVLTETVADTLMALVLSTARRVVEVAERVKAGEWTASIGPDWYGTDVHHKTLGIVGMGRIGMALAQRAHFGFNMPILYNARRHHKEAEERFNARYCDLDTLLQESDFVCLILPLTDETHHLFGAEQFAKMKPSAIFINAGRGPVVDENALIAALQKGEIHAAGLDVFEQEPLSVDSPLLSMANVVAVPHIGSATHETRYGMAACAVDNLIDALQGKVEKNCVNPHVAD</sequence>
<feature type="chain" id="PRO_0000348400" description="Glyoxylate/hydroxypyruvate reductase B">
    <location>
        <begin position="1"/>
        <end position="324"/>
    </location>
</feature>
<feature type="active site" evidence="1">
    <location>
        <position position="237"/>
    </location>
</feature>
<feature type="active site" evidence="1">
    <location>
        <position position="266"/>
    </location>
</feature>
<feature type="active site" description="Proton donor" evidence="1">
    <location>
        <position position="285"/>
    </location>
</feature>
<evidence type="ECO:0000255" key="1">
    <source>
        <dbReference type="HAMAP-Rule" id="MF_01667"/>
    </source>
</evidence>
<evidence type="ECO:0000305" key="2"/>